<protein>
    <recommendedName>
        <fullName evidence="1">Large ribosomal subunit protein bL32</fullName>
    </recommendedName>
    <alternativeName>
        <fullName evidence="3">50S ribosomal protein L32</fullName>
    </alternativeName>
</protein>
<reference key="1">
    <citation type="journal article" date="2006" name="Genome Res.">
        <title>Massive genome erosion and functional adaptations provide insights into the symbiotic lifestyle of Sodalis glossinidius in the tsetse host.</title>
        <authorList>
            <person name="Toh H."/>
            <person name="Weiss B.L."/>
            <person name="Perkin S.A.H."/>
            <person name="Yamashita A."/>
            <person name="Oshima K."/>
            <person name="Hattori M."/>
            <person name="Aksoy S."/>
        </authorList>
    </citation>
    <scope>NUCLEOTIDE SEQUENCE [LARGE SCALE GENOMIC DNA]</scope>
    <source>
        <strain>morsitans</strain>
    </source>
</reference>
<comment type="similarity">
    <text evidence="1">Belongs to the bacterial ribosomal protein bL32 family.</text>
</comment>
<dbReference type="EMBL" id="AP008232">
    <property type="protein sequence ID" value="BAE74331.1"/>
    <property type="molecule type" value="Genomic_DNA"/>
</dbReference>
<dbReference type="RefSeq" id="WP_011410916.1">
    <property type="nucleotide sequence ID" value="NZ_LN854557.1"/>
</dbReference>
<dbReference type="SMR" id="Q2NU44"/>
<dbReference type="STRING" id="343509.SG1056"/>
<dbReference type="KEGG" id="sgl:SG1056"/>
<dbReference type="eggNOG" id="COG0333">
    <property type="taxonomic scope" value="Bacteria"/>
</dbReference>
<dbReference type="HOGENOM" id="CLU_129084_2_1_6"/>
<dbReference type="OrthoDB" id="9801927at2"/>
<dbReference type="Proteomes" id="UP000001932">
    <property type="component" value="Chromosome"/>
</dbReference>
<dbReference type="GO" id="GO:0015934">
    <property type="term" value="C:large ribosomal subunit"/>
    <property type="evidence" value="ECO:0007669"/>
    <property type="project" value="InterPro"/>
</dbReference>
<dbReference type="GO" id="GO:0003735">
    <property type="term" value="F:structural constituent of ribosome"/>
    <property type="evidence" value="ECO:0007669"/>
    <property type="project" value="InterPro"/>
</dbReference>
<dbReference type="GO" id="GO:0006412">
    <property type="term" value="P:translation"/>
    <property type="evidence" value="ECO:0007669"/>
    <property type="project" value="UniProtKB-UniRule"/>
</dbReference>
<dbReference type="HAMAP" id="MF_00340">
    <property type="entry name" value="Ribosomal_bL32"/>
    <property type="match status" value="1"/>
</dbReference>
<dbReference type="InterPro" id="IPR002677">
    <property type="entry name" value="Ribosomal_bL32"/>
</dbReference>
<dbReference type="InterPro" id="IPR044957">
    <property type="entry name" value="Ribosomal_bL32_bact"/>
</dbReference>
<dbReference type="InterPro" id="IPR011332">
    <property type="entry name" value="Ribosomal_zn-bd"/>
</dbReference>
<dbReference type="NCBIfam" id="TIGR01031">
    <property type="entry name" value="rpmF_bact"/>
    <property type="match status" value="1"/>
</dbReference>
<dbReference type="PANTHER" id="PTHR35534">
    <property type="entry name" value="50S RIBOSOMAL PROTEIN L32"/>
    <property type="match status" value="1"/>
</dbReference>
<dbReference type="PANTHER" id="PTHR35534:SF1">
    <property type="entry name" value="LARGE RIBOSOMAL SUBUNIT PROTEIN BL32"/>
    <property type="match status" value="1"/>
</dbReference>
<dbReference type="Pfam" id="PF01783">
    <property type="entry name" value="Ribosomal_L32p"/>
    <property type="match status" value="1"/>
</dbReference>
<dbReference type="SUPFAM" id="SSF57829">
    <property type="entry name" value="Zn-binding ribosomal proteins"/>
    <property type="match status" value="1"/>
</dbReference>
<organism>
    <name type="scientific">Sodalis glossinidius (strain morsitans)</name>
    <dbReference type="NCBI Taxonomy" id="343509"/>
    <lineage>
        <taxon>Bacteria</taxon>
        <taxon>Pseudomonadati</taxon>
        <taxon>Pseudomonadota</taxon>
        <taxon>Gammaproteobacteria</taxon>
        <taxon>Enterobacterales</taxon>
        <taxon>Bruguierivoracaceae</taxon>
        <taxon>Sodalis</taxon>
    </lineage>
</organism>
<feature type="chain" id="PRO_0000296567" description="Large ribosomal subunit protein bL32">
    <location>
        <begin position="1"/>
        <end position="56"/>
    </location>
</feature>
<feature type="region of interest" description="Disordered" evidence="2">
    <location>
        <begin position="1"/>
        <end position="34"/>
    </location>
</feature>
<evidence type="ECO:0000255" key="1">
    <source>
        <dbReference type="HAMAP-Rule" id="MF_00340"/>
    </source>
</evidence>
<evidence type="ECO:0000256" key="2">
    <source>
        <dbReference type="SAM" id="MobiDB-lite"/>
    </source>
</evidence>
<evidence type="ECO:0000305" key="3"/>
<gene>
    <name evidence="1" type="primary">rpmF</name>
    <name type="ordered locus">SG1056</name>
</gene>
<keyword id="KW-0687">Ribonucleoprotein</keyword>
<keyword id="KW-0689">Ribosomal protein</keyword>
<proteinExistence type="inferred from homology"/>
<name>RL32_SODGM</name>
<accession>Q2NU44</accession>
<sequence length="56" mass="6290">MAVQQNKPTRSKRGMRRSHDALTTSTVSVDKASGETHLRHHITADGFYRGRKVIAK</sequence>